<feature type="chain" id="PRO_0000403972" description="GTPase Era">
    <location>
        <begin position="1"/>
        <end position="301"/>
    </location>
</feature>
<feature type="domain" description="Era-type G" evidence="3">
    <location>
        <begin position="6"/>
        <end position="173"/>
    </location>
</feature>
<feature type="domain" description="KH type-2">
    <location>
        <begin position="205"/>
        <end position="282"/>
    </location>
</feature>
<feature type="region of interest" description="G1" evidence="3">
    <location>
        <begin position="14"/>
        <end position="21"/>
    </location>
</feature>
<feature type="region of interest" description="G2" evidence="3">
    <location>
        <begin position="40"/>
        <end position="44"/>
    </location>
</feature>
<feature type="region of interest" description="G3" evidence="3">
    <location>
        <begin position="61"/>
        <end position="64"/>
    </location>
</feature>
<feature type="region of interest" description="G4" evidence="3">
    <location>
        <begin position="125"/>
        <end position="128"/>
    </location>
</feature>
<feature type="region of interest" description="G5" evidence="3">
    <location>
        <begin position="152"/>
        <end position="154"/>
    </location>
</feature>
<feature type="binding site" evidence="2">
    <location>
        <begin position="14"/>
        <end position="21"/>
    </location>
    <ligand>
        <name>GTP</name>
        <dbReference type="ChEBI" id="CHEBI:37565"/>
    </ligand>
</feature>
<feature type="binding site" evidence="2">
    <location>
        <begin position="61"/>
        <end position="65"/>
    </location>
    <ligand>
        <name>GTP</name>
        <dbReference type="ChEBI" id="CHEBI:37565"/>
    </ligand>
</feature>
<feature type="binding site" evidence="2">
    <location>
        <begin position="125"/>
        <end position="128"/>
    </location>
    <ligand>
        <name>GTP</name>
        <dbReference type="ChEBI" id="CHEBI:37565"/>
    </ligand>
</feature>
<feature type="strand" evidence="6">
    <location>
        <begin position="6"/>
        <end position="13"/>
    </location>
</feature>
<feature type="helix" evidence="6">
    <location>
        <begin position="20"/>
        <end position="28"/>
    </location>
</feature>
<feature type="strand" evidence="6">
    <location>
        <begin position="37"/>
        <end position="39"/>
    </location>
</feature>
<feature type="strand" evidence="6">
    <location>
        <begin position="46"/>
        <end position="52"/>
    </location>
</feature>
<feature type="strand" evidence="6">
    <location>
        <begin position="55"/>
        <end position="61"/>
    </location>
</feature>
<feature type="helix" evidence="6">
    <location>
        <begin position="71"/>
        <end position="83"/>
    </location>
</feature>
<feature type="strand" evidence="6">
    <location>
        <begin position="88"/>
        <end position="95"/>
    </location>
</feature>
<feature type="helix" evidence="6">
    <location>
        <begin position="102"/>
        <end position="111"/>
    </location>
</feature>
<feature type="helix" evidence="6">
    <location>
        <begin position="112"/>
        <end position="114"/>
    </location>
</feature>
<feature type="turn" evidence="6">
    <location>
        <begin position="115"/>
        <end position="117"/>
    </location>
</feature>
<feature type="strand" evidence="6">
    <location>
        <begin position="120"/>
        <end position="125"/>
    </location>
</feature>
<feature type="helix" evidence="6">
    <location>
        <begin position="127"/>
        <end position="129"/>
    </location>
</feature>
<feature type="helix" evidence="6">
    <location>
        <begin position="133"/>
        <end position="142"/>
    </location>
</feature>
<feature type="strand" evidence="6">
    <location>
        <begin position="147"/>
        <end position="151"/>
    </location>
</feature>
<feature type="helix" evidence="6">
    <location>
        <begin position="157"/>
        <end position="168"/>
    </location>
</feature>
<feature type="strand" evidence="6">
    <location>
        <begin position="184"/>
        <end position="187"/>
    </location>
</feature>
<feature type="helix" evidence="6">
    <location>
        <begin position="189"/>
        <end position="203"/>
    </location>
</feature>
<feature type="helix" evidence="6">
    <location>
        <begin position="209"/>
        <end position="212"/>
    </location>
</feature>
<feature type="strand" evidence="6">
    <location>
        <begin position="214"/>
        <end position="223"/>
    </location>
</feature>
<feature type="turn" evidence="6">
    <location>
        <begin position="224"/>
        <end position="226"/>
    </location>
</feature>
<feature type="strand" evidence="6">
    <location>
        <begin position="227"/>
        <end position="238"/>
    </location>
</feature>
<feature type="helix" evidence="6">
    <location>
        <begin position="239"/>
        <end position="246"/>
    </location>
</feature>
<feature type="helix" evidence="6">
    <location>
        <begin position="248"/>
        <end position="250"/>
    </location>
</feature>
<feature type="helix" evidence="6">
    <location>
        <begin position="251"/>
        <end position="268"/>
    </location>
</feature>
<feature type="strand" evidence="6">
    <location>
        <begin position="270"/>
        <end position="280"/>
    </location>
</feature>
<feature type="helix" evidence="6">
    <location>
        <begin position="284"/>
        <end position="286"/>
    </location>
</feature>
<feature type="helix" evidence="6">
    <location>
        <begin position="288"/>
        <end position="294"/>
    </location>
</feature>
<sequence length="301" mass="33809">MAEKTYSGFVAIVGKPNVGKSTLLNNLLGVKVAPISPRPQTTRKRLRGILTEGRRQIVFVDTPGLHKPMDALGEFMDQEVYEALADVNAVVWVVDLRHPPTPEDELVARALKPLVGKVPILLVGNKLDAAKYPEEAMKAYHELLPEAEPRMLSALDERQVAELKADLLALMPEGPFFYPEDYAKSDQTFGEWVAEILREEAMKRLWHEVPYAVATKVEEVAERENGVLYIKAILYVERPSQKAIVIGEGGRKIKEIGQATRKQLEALLGKKVYLDLEVKVYPDWRKDPEALRELGYRSSVG</sequence>
<gene>
    <name type="primary">era</name>
    <name type="ordered locus">TTHA0120</name>
</gene>
<protein>
    <recommendedName>
        <fullName>GTPase Era</fullName>
    </recommendedName>
</protein>
<organism>
    <name type="scientific">Thermus thermophilus (strain ATCC 27634 / DSM 579 / HB8)</name>
    <dbReference type="NCBI Taxonomy" id="300852"/>
    <lineage>
        <taxon>Bacteria</taxon>
        <taxon>Thermotogati</taxon>
        <taxon>Deinococcota</taxon>
        <taxon>Deinococci</taxon>
        <taxon>Thermales</taxon>
        <taxon>Thermaceae</taxon>
        <taxon>Thermus</taxon>
    </lineage>
</organism>
<keyword id="KW-0002">3D-structure</keyword>
<keyword id="KW-0997">Cell inner membrane</keyword>
<keyword id="KW-1003">Cell membrane</keyword>
<keyword id="KW-0963">Cytoplasm</keyword>
<keyword id="KW-0342">GTP-binding</keyword>
<keyword id="KW-0472">Membrane</keyword>
<keyword id="KW-0547">Nucleotide-binding</keyword>
<keyword id="KW-1185">Reference proteome</keyword>
<keyword id="KW-0690">Ribosome biogenesis</keyword>
<keyword id="KW-0694">RNA-binding</keyword>
<keyword id="KW-0699">rRNA-binding</keyword>
<dbReference type="EMBL" id="AP008226">
    <property type="protein sequence ID" value="BAD69943.1"/>
    <property type="molecule type" value="Genomic_DNA"/>
</dbReference>
<dbReference type="RefSeq" id="WP_008630929.1">
    <property type="nucleotide sequence ID" value="NC_006461.1"/>
</dbReference>
<dbReference type="RefSeq" id="YP_143386.1">
    <property type="nucleotide sequence ID" value="NC_006461.1"/>
</dbReference>
<dbReference type="PDB" id="1WF3">
    <property type="method" value="X-ray"/>
    <property type="resolution" value="1.88 A"/>
    <property type="chains" value="A=1-301"/>
</dbReference>
<dbReference type="PDB" id="1X18">
    <property type="method" value="EM"/>
    <property type="resolution" value="13.50 A"/>
    <property type="chains" value="X=1-301"/>
</dbReference>
<dbReference type="PDB" id="1X1L">
    <property type="method" value="EM"/>
    <property type="resolution" value="13.50 A"/>
    <property type="chains" value="X=1-301"/>
</dbReference>
<dbReference type="PDBsum" id="1WF3"/>
<dbReference type="PDBsum" id="1X18"/>
<dbReference type="PDBsum" id="1X1L"/>
<dbReference type="SMR" id="Q5SM23"/>
<dbReference type="EnsemblBacteria" id="BAD69943">
    <property type="protein sequence ID" value="BAD69943"/>
    <property type="gene ID" value="BAD69943"/>
</dbReference>
<dbReference type="GeneID" id="3167951"/>
<dbReference type="KEGG" id="ttj:TTHA0120"/>
<dbReference type="PATRIC" id="fig|300852.9.peg.118"/>
<dbReference type="eggNOG" id="COG1159">
    <property type="taxonomic scope" value="Bacteria"/>
</dbReference>
<dbReference type="HOGENOM" id="CLU_038009_1_0_0"/>
<dbReference type="PhylomeDB" id="Q5SM23"/>
<dbReference type="EvolutionaryTrace" id="Q5SM23"/>
<dbReference type="Proteomes" id="UP000000532">
    <property type="component" value="Chromosome"/>
</dbReference>
<dbReference type="GO" id="GO:0005829">
    <property type="term" value="C:cytosol"/>
    <property type="evidence" value="ECO:0007669"/>
    <property type="project" value="TreeGrafter"/>
</dbReference>
<dbReference type="GO" id="GO:0005886">
    <property type="term" value="C:plasma membrane"/>
    <property type="evidence" value="ECO:0007669"/>
    <property type="project" value="UniProtKB-SubCell"/>
</dbReference>
<dbReference type="GO" id="GO:0005525">
    <property type="term" value="F:GTP binding"/>
    <property type="evidence" value="ECO:0007669"/>
    <property type="project" value="UniProtKB-UniRule"/>
</dbReference>
<dbReference type="GO" id="GO:0003924">
    <property type="term" value="F:GTPase activity"/>
    <property type="evidence" value="ECO:0007669"/>
    <property type="project" value="UniProtKB-UniRule"/>
</dbReference>
<dbReference type="GO" id="GO:0043024">
    <property type="term" value="F:ribosomal small subunit binding"/>
    <property type="evidence" value="ECO:0000314"/>
    <property type="project" value="UniProtKB"/>
</dbReference>
<dbReference type="GO" id="GO:0070181">
    <property type="term" value="F:small ribosomal subunit rRNA binding"/>
    <property type="evidence" value="ECO:0000314"/>
    <property type="project" value="UniProtKB"/>
</dbReference>
<dbReference type="GO" id="GO:0000028">
    <property type="term" value="P:ribosomal small subunit assembly"/>
    <property type="evidence" value="ECO:0000314"/>
    <property type="project" value="UniProtKB"/>
</dbReference>
<dbReference type="CDD" id="cd04163">
    <property type="entry name" value="Era"/>
    <property type="match status" value="1"/>
</dbReference>
<dbReference type="CDD" id="cd22534">
    <property type="entry name" value="KH-II_Era"/>
    <property type="match status" value="1"/>
</dbReference>
<dbReference type="FunFam" id="3.30.300.20:FF:000003">
    <property type="entry name" value="GTPase Era"/>
    <property type="match status" value="1"/>
</dbReference>
<dbReference type="FunFam" id="3.40.50.300:FF:003182">
    <property type="entry name" value="GTPase Era"/>
    <property type="match status" value="1"/>
</dbReference>
<dbReference type="Gene3D" id="3.30.300.20">
    <property type="match status" value="1"/>
</dbReference>
<dbReference type="Gene3D" id="3.40.50.300">
    <property type="entry name" value="P-loop containing nucleotide triphosphate hydrolases"/>
    <property type="match status" value="1"/>
</dbReference>
<dbReference type="HAMAP" id="MF_00367">
    <property type="entry name" value="GTPase_Era"/>
    <property type="match status" value="1"/>
</dbReference>
<dbReference type="InterPro" id="IPR030388">
    <property type="entry name" value="G_ERA_dom"/>
</dbReference>
<dbReference type="InterPro" id="IPR006073">
    <property type="entry name" value="GTP-bd"/>
</dbReference>
<dbReference type="InterPro" id="IPR005662">
    <property type="entry name" value="GTPase_Era-like"/>
</dbReference>
<dbReference type="InterPro" id="IPR015946">
    <property type="entry name" value="KH_dom-like_a/b"/>
</dbReference>
<dbReference type="InterPro" id="IPR004044">
    <property type="entry name" value="KH_dom_type_2"/>
</dbReference>
<dbReference type="InterPro" id="IPR009019">
    <property type="entry name" value="KH_sf_prok-type"/>
</dbReference>
<dbReference type="InterPro" id="IPR027417">
    <property type="entry name" value="P-loop_NTPase"/>
</dbReference>
<dbReference type="InterPro" id="IPR005225">
    <property type="entry name" value="Small_GTP-bd"/>
</dbReference>
<dbReference type="NCBIfam" id="TIGR00436">
    <property type="entry name" value="era"/>
    <property type="match status" value="1"/>
</dbReference>
<dbReference type="NCBIfam" id="NF000908">
    <property type="entry name" value="PRK00089.1"/>
    <property type="match status" value="1"/>
</dbReference>
<dbReference type="NCBIfam" id="TIGR00231">
    <property type="entry name" value="small_GTP"/>
    <property type="match status" value="1"/>
</dbReference>
<dbReference type="PANTHER" id="PTHR42698">
    <property type="entry name" value="GTPASE ERA"/>
    <property type="match status" value="1"/>
</dbReference>
<dbReference type="PANTHER" id="PTHR42698:SF1">
    <property type="entry name" value="GTPASE ERA, MITOCHONDRIAL"/>
    <property type="match status" value="1"/>
</dbReference>
<dbReference type="Pfam" id="PF07650">
    <property type="entry name" value="KH_2"/>
    <property type="match status" value="1"/>
</dbReference>
<dbReference type="Pfam" id="PF01926">
    <property type="entry name" value="MMR_HSR1"/>
    <property type="match status" value="1"/>
</dbReference>
<dbReference type="PRINTS" id="PR00326">
    <property type="entry name" value="GTP1OBG"/>
</dbReference>
<dbReference type="SUPFAM" id="SSF52540">
    <property type="entry name" value="P-loop containing nucleoside triphosphate hydrolases"/>
    <property type="match status" value="1"/>
</dbReference>
<dbReference type="SUPFAM" id="SSF54814">
    <property type="entry name" value="Prokaryotic type KH domain (KH-domain type II)"/>
    <property type="match status" value="1"/>
</dbReference>
<dbReference type="PROSITE" id="PS51713">
    <property type="entry name" value="G_ERA"/>
    <property type="match status" value="1"/>
</dbReference>
<dbReference type="PROSITE" id="PS50823">
    <property type="entry name" value="KH_TYPE_2"/>
    <property type="match status" value="1"/>
</dbReference>
<comment type="function">
    <text evidence="1">An essential GTPase that binds both GDP and GTP, with rapid nucleotide exchange. Plays a role in 16S rRNA processing and 30S ribosomal subunit biogenesis and possibly also in cell cycle regulation and energy metabolism (By similarity).</text>
</comment>
<comment type="function">
    <text>The Era binding site on the 30S subunit overlaps that of protein S1 and is in direct contact with 5 nucleotides directly upstream of the anti-Shine-Dalgarno sequence; the presence of Era may prevent mRNA recruitment. 30S subunits bound to Era are not able to bind to the 50S subunit to make functional ribosomes. Era may serve a role in the final stages of 30S ribosomal subunit assembly.</text>
</comment>
<comment type="subunit">
    <text evidence="4 5">Monomer (Probable). Binds to the 30S ribosomal subunit, between the head and platform, contacting the 16S rRNA. Contacts ribosomal proteins S7 and S18 and may contact proteins S2 and S11.</text>
</comment>
<comment type="subcellular location">
    <subcellularLocation>
        <location>Cytoplasm</location>
    </subcellularLocation>
    <subcellularLocation>
        <location evidence="1">Cell inner membrane</location>
        <topology evidence="1">Peripheral membrane protein</topology>
    </subcellularLocation>
</comment>
<comment type="similarity">
    <text evidence="3 5">Belongs to the TRAFAC class TrmE-Era-EngA-EngB-Septin-like GTPase superfamily. Era GTPase family.</text>
</comment>
<reference key="1">
    <citation type="submission" date="2004-11" db="EMBL/GenBank/DDBJ databases">
        <title>Complete genome sequence of Thermus thermophilus HB8.</title>
        <authorList>
            <person name="Masui R."/>
            <person name="Kurokawa K."/>
            <person name="Nakagawa N."/>
            <person name="Tokunaga F."/>
            <person name="Koyama Y."/>
            <person name="Shibata T."/>
            <person name="Oshima T."/>
            <person name="Yokoyama S."/>
            <person name="Yasunaga T."/>
            <person name="Kuramitsu S."/>
        </authorList>
    </citation>
    <scope>NUCLEOTIDE SEQUENCE [LARGE SCALE GENOMIC DNA]</scope>
    <source>
        <strain>ATCC 27634 / DSM 579 / HB8</strain>
    </source>
</reference>
<reference key="2">
    <citation type="journal article" date="2005" name="Mol. Cell">
        <title>Interaction of Era with the 30S ribosomal subunit implications for 30S subunit assembly.</title>
        <authorList>
            <person name="Sharma M.R."/>
            <person name="Barat C."/>
            <person name="Wilson D.N."/>
            <person name="Booth T.M."/>
            <person name="Kawazoe M."/>
            <person name="Hori-Takemoto C."/>
            <person name="Shirouzu M."/>
            <person name="Yokoyama S."/>
            <person name="Fucini P."/>
            <person name="Agrawal R.K."/>
        </authorList>
    </citation>
    <scope>STRUCTURE BY ELECTRON MICROSCOPY (13.50 ANGSTROMS)</scope>
    <scope>INTERACTION WITH 30S RIBOSOMAL SUBUNIT</scope>
    <scope>RIBOSOMAL PROTEINS S2; S7; S11 AND S18</scope>
    <scope>SMALL RRNA-BINDING</scope>
    <source>
        <strain>ATCC 27634 / DSM 579 / HB8</strain>
    </source>
</reference>
<reference key="3">
    <citation type="submission" date="2009-02" db="PDB data bank">
        <title>Crystal structure of GTP-binding protein TT1341 from Thermus thermophilus HB8.</title>
        <authorList>
            <person name="Kawazoe M."/>
            <person name="Hori-Takemoto C."/>
            <person name="Kaminishi T."/>
            <person name="Sekine S."/>
            <person name="Shirouzu M."/>
            <person name="Yokoyama S."/>
        </authorList>
    </citation>
    <scope>X-RAY CRYSTALLOGRAPHY (1.88 ANGSTROMS) IN COMPLEX WITH A GUANINE NUCLEOTIDE</scope>
    <source>
        <strain>ATCC 27634 / DSM 579 / HB8</strain>
    </source>
</reference>
<name>ERA_THET8</name>
<evidence type="ECO:0000250" key="1"/>
<evidence type="ECO:0000255" key="2"/>
<evidence type="ECO:0000255" key="3">
    <source>
        <dbReference type="PROSITE-ProRule" id="PRU01050"/>
    </source>
</evidence>
<evidence type="ECO:0000269" key="4">
    <source ref="3"/>
</evidence>
<evidence type="ECO:0000305" key="5"/>
<evidence type="ECO:0007829" key="6">
    <source>
        <dbReference type="PDB" id="1WF3"/>
    </source>
</evidence>
<accession>Q5SM23</accession>
<proteinExistence type="evidence at protein level"/>